<proteinExistence type="inferred from homology"/>
<accession>B7MQD0</accession>
<sequence>MNIIEANVATPDARVAITIARFNNFINDSLLEGAIDALKRIGQVKDENITVVWVPGAYELPLAAGALAKTGKYDAVIALGTVIRGGTAHFEYVAGGASNGLAHVAQDSEIPVAFGVLTTESIEQAIERAGTKAGNKGAEAALTALEMINVLKAIKA</sequence>
<name>RISB_ECO81</name>
<protein>
    <recommendedName>
        <fullName evidence="1">6,7-dimethyl-8-ribityllumazine synthase</fullName>
        <shortName evidence="1">DMRL synthase</shortName>
        <shortName evidence="1">LS</shortName>
        <shortName evidence="1">Lumazine synthase</shortName>
        <ecNumber evidence="1">2.5.1.78</ecNumber>
    </recommendedName>
</protein>
<feature type="chain" id="PRO_1000195489" description="6,7-dimethyl-8-ribityllumazine synthase">
    <location>
        <begin position="1"/>
        <end position="156"/>
    </location>
</feature>
<feature type="active site" description="Proton donor" evidence="1">
    <location>
        <position position="89"/>
    </location>
</feature>
<feature type="binding site" evidence="1">
    <location>
        <position position="22"/>
    </location>
    <ligand>
        <name>5-amino-6-(D-ribitylamino)uracil</name>
        <dbReference type="ChEBI" id="CHEBI:15934"/>
    </ligand>
</feature>
<feature type="binding site" evidence="1">
    <location>
        <begin position="57"/>
        <end position="59"/>
    </location>
    <ligand>
        <name>5-amino-6-(D-ribitylamino)uracil</name>
        <dbReference type="ChEBI" id="CHEBI:15934"/>
    </ligand>
</feature>
<feature type="binding site" evidence="1">
    <location>
        <begin position="81"/>
        <end position="83"/>
    </location>
    <ligand>
        <name>5-amino-6-(D-ribitylamino)uracil</name>
        <dbReference type="ChEBI" id="CHEBI:15934"/>
    </ligand>
</feature>
<feature type="binding site" evidence="1">
    <location>
        <begin position="86"/>
        <end position="87"/>
    </location>
    <ligand>
        <name>(2S)-2-hydroxy-3-oxobutyl phosphate</name>
        <dbReference type="ChEBI" id="CHEBI:58830"/>
    </ligand>
</feature>
<feature type="binding site" evidence="1">
    <location>
        <position position="114"/>
    </location>
    <ligand>
        <name>5-amino-6-(D-ribitylamino)uracil</name>
        <dbReference type="ChEBI" id="CHEBI:15934"/>
    </ligand>
</feature>
<feature type="binding site" evidence="1">
    <location>
        <position position="128"/>
    </location>
    <ligand>
        <name>(2S)-2-hydroxy-3-oxobutyl phosphate</name>
        <dbReference type="ChEBI" id="CHEBI:58830"/>
    </ligand>
</feature>
<evidence type="ECO:0000255" key="1">
    <source>
        <dbReference type="HAMAP-Rule" id="MF_00178"/>
    </source>
</evidence>
<gene>
    <name evidence="1" type="primary">ribH</name>
    <name type="ordered locus">ECED1_0438</name>
</gene>
<reference key="1">
    <citation type="journal article" date="2009" name="PLoS Genet.">
        <title>Organised genome dynamics in the Escherichia coli species results in highly diverse adaptive paths.</title>
        <authorList>
            <person name="Touchon M."/>
            <person name="Hoede C."/>
            <person name="Tenaillon O."/>
            <person name="Barbe V."/>
            <person name="Baeriswyl S."/>
            <person name="Bidet P."/>
            <person name="Bingen E."/>
            <person name="Bonacorsi S."/>
            <person name="Bouchier C."/>
            <person name="Bouvet O."/>
            <person name="Calteau A."/>
            <person name="Chiapello H."/>
            <person name="Clermont O."/>
            <person name="Cruveiller S."/>
            <person name="Danchin A."/>
            <person name="Diard M."/>
            <person name="Dossat C."/>
            <person name="Karoui M.E."/>
            <person name="Frapy E."/>
            <person name="Garry L."/>
            <person name="Ghigo J.M."/>
            <person name="Gilles A.M."/>
            <person name="Johnson J."/>
            <person name="Le Bouguenec C."/>
            <person name="Lescat M."/>
            <person name="Mangenot S."/>
            <person name="Martinez-Jehanne V."/>
            <person name="Matic I."/>
            <person name="Nassif X."/>
            <person name="Oztas S."/>
            <person name="Petit M.A."/>
            <person name="Pichon C."/>
            <person name="Rouy Z."/>
            <person name="Ruf C.S."/>
            <person name="Schneider D."/>
            <person name="Tourret J."/>
            <person name="Vacherie B."/>
            <person name="Vallenet D."/>
            <person name="Medigue C."/>
            <person name="Rocha E.P.C."/>
            <person name="Denamur E."/>
        </authorList>
    </citation>
    <scope>NUCLEOTIDE SEQUENCE [LARGE SCALE GENOMIC DNA]</scope>
    <source>
        <strain>ED1a</strain>
    </source>
</reference>
<comment type="function">
    <text evidence="1">Catalyzes the formation of 6,7-dimethyl-8-ribityllumazine by condensation of 5-amino-6-(D-ribitylamino)uracil with 3,4-dihydroxy-2-butanone 4-phosphate. This is the penultimate step in the biosynthesis of riboflavin.</text>
</comment>
<comment type="catalytic activity">
    <reaction evidence="1">
        <text>(2S)-2-hydroxy-3-oxobutyl phosphate + 5-amino-6-(D-ribitylamino)uracil = 6,7-dimethyl-8-(1-D-ribityl)lumazine + phosphate + 2 H2O + H(+)</text>
        <dbReference type="Rhea" id="RHEA:26152"/>
        <dbReference type="ChEBI" id="CHEBI:15377"/>
        <dbReference type="ChEBI" id="CHEBI:15378"/>
        <dbReference type="ChEBI" id="CHEBI:15934"/>
        <dbReference type="ChEBI" id="CHEBI:43474"/>
        <dbReference type="ChEBI" id="CHEBI:58201"/>
        <dbReference type="ChEBI" id="CHEBI:58830"/>
        <dbReference type="EC" id="2.5.1.78"/>
    </reaction>
</comment>
<comment type="pathway">
    <text evidence="1">Cofactor biosynthesis; riboflavin biosynthesis; riboflavin from 2-hydroxy-3-oxobutyl phosphate and 5-amino-6-(D-ribitylamino)uracil: step 1/2.</text>
</comment>
<comment type="subunit">
    <text evidence="1">Forms an icosahedral capsid composed of 60 subunits, arranged as a dodecamer of pentamers.</text>
</comment>
<comment type="similarity">
    <text evidence="1">Belongs to the DMRL synthase family.</text>
</comment>
<keyword id="KW-0686">Riboflavin biosynthesis</keyword>
<keyword id="KW-0808">Transferase</keyword>
<organism>
    <name type="scientific">Escherichia coli O81 (strain ED1a)</name>
    <dbReference type="NCBI Taxonomy" id="585397"/>
    <lineage>
        <taxon>Bacteria</taxon>
        <taxon>Pseudomonadati</taxon>
        <taxon>Pseudomonadota</taxon>
        <taxon>Gammaproteobacteria</taxon>
        <taxon>Enterobacterales</taxon>
        <taxon>Enterobacteriaceae</taxon>
        <taxon>Escherichia</taxon>
    </lineage>
</organism>
<dbReference type="EC" id="2.5.1.78" evidence="1"/>
<dbReference type="EMBL" id="CU928162">
    <property type="protein sequence ID" value="CAR06648.1"/>
    <property type="molecule type" value="Genomic_DNA"/>
</dbReference>
<dbReference type="SMR" id="B7MQD0"/>
<dbReference type="KEGG" id="ecq:ECED1_0438"/>
<dbReference type="HOGENOM" id="CLU_089358_1_1_6"/>
<dbReference type="UniPathway" id="UPA00275">
    <property type="reaction ID" value="UER00404"/>
</dbReference>
<dbReference type="Proteomes" id="UP000000748">
    <property type="component" value="Chromosome"/>
</dbReference>
<dbReference type="GO" id="GO:0005829">
    <property type="term" value="C:cytosol"/>
    <property type="evidence" value="ECO:0007669"/>
    <property type="project" value="TreeGrafter"/>
</dbReference>
<dbReference type="GO" id="GO:0009349">
    <property type="term" value="C:riboflavin synthase complex"/>
    <property type="evidence" value="ECO:0007669"/>
    <property type="project" value="InterPro"/>
</dbReference>
<dbReference type="GO" id="GO:0000906">
    <property type="term" value="F:6,7-dimethyl-8-ribityllumazine synthase activity"/>
    <property type="evidence" value="ECO:0007669"/>
    <property type="project" value="UniProtKB-UniRule"/>
</dbReference>
<dbReference type="GO" id="GO:0009231">
    <property type="term" value="P:riboflavin biosynthetic process"/>
    <property type="evidence" value="ECO:0007669"/>
    <property type="project" value="UniProtKB-UniRule"/>
</dbReference>
<dbReference type="CDD" id="cd09209">
    <property type="entry name" value="Lumazine_synthase-I"/>
    <property type="match status" value="1"/>
</dbReference>
<dbReference type="FunFam" id="3.40.50.960:FF:000001">
    <property type="entry name" value="6,7-dimethyl-8-ribityllumazine synthase"/>
    <property type="match status" value="1"/>
</dbReference>
<dbReference type="Gene3D" id="3.40.50.960">
    <property type="entry name" value="Lumazine/riboflavin synthase"/>
    <property type="match status" value="1"/>
</dbReference>
<dbReference type="HAMAP" id="MF_00178">
    <property type="entry name" value="Lumazine_synth"/>
    <property type="match status" value="1"/>
</dbReference>
<dbReference type="InterPro" id="IPR034964">
    <property type="entry name" value="LS"/>
</dbReference>
<dbReference type="InterPro" id="IPR002180">
    <property type="entry name" value="LS/RS"/>
</dbReference>
<dbReference type="InterPro" id="IPR036467">
    <property type="entry name" value="LS/RS_sf"/>
</dbReference>
<dbReference type="NCBIfam" id="TIGR00114">
    <property type="entry name" value="lumazine-synth"/>
    <property type="match status" value="1"/>
</dbReference>
<dbReference type="NCBIfam" id="NF000812">
    <property type="entry name" value="PRK00061.1-4"/>
    <property type="match status" value="1"/>
</dbReference>
<dbReference type="PANTHER" id="PTHR21058:SF0">
    <property type="entry name" value="6,7-DIMETHYL-8-RIBITYLLUMAZINE SYNTHASE"/>
    <property type="match status" value="1"/>
</dbReference>
<dbReference type="PANTHER" id="PTHR21058">
    <property type="entry name" value="6,7-DIMETHYL-8-RIBITYLLUMAZINE SYNTHASE DMRL SYNTHASE LUMAZINE SYNTHASE"/>
    <property type="match status" value="1"/>
</dbReference>
<dbReference type="Pfam" id="PF00885">
    <property type="entry name" value="DMRL_synthase"/>
    <property type="match status" value="1"/>
</dbReference>
<dbReference type="SUPFAM" id="SSF52121">
    <property type="entry name" value="Lumazine synthase"/>
    <property type="match status" value="1"/>
</dbReference>